<feature type="chain" id="PRO_0000227298" description="UvrABC system protein B">
    <location>
        <begin position="1"/>
        <end position="668"/>
    </location>
</feature>
<feature type="domain" description="Helicase ATP-binding" evidence="1">
    <location>
        <begin position="31"/>
        <end position="416"/>
    </location>
</feature>
<feature type="domain" description="Helicase C-terminal" evidence="1">
    <location>
        <begin position="433"/>
        <end position="596"/>
    </location>
</feature>
<feature type="domain" description="UVR" evidence="1">
    <location>
        <begin position="621"/>
        <end position="656"/>
    </location>
</feature>
<feature type="short sequence motif" description="Beta-hairpin">
    <location>
        <begin position="97"/>
        <end position="120"/>
    </location>
</feature>
<feature type="binding site" evidence="1">
    <location>
        <begin position="44"/>
        <end position="51"/>
    </location>
    <ligand>
        <name>ATP</name>
        <dbReference type="ChEBI" id="CHEBI:30616"/>
    </ligand>
</feature>
<evidence type="ECO:0000255" key="1">
    <source>
        <dbReference type="HAMAP-Rule" id="MF_00204"/>
    </source>
</evidence>
<gene>
    <name evidence="1" type="primary">uvrB</name>
    <name type="ordered locus">CTA_0636</name>
</gene>
<organism>
    <name type="scientific">Chlamydia trachomatis serovar A (strain ATCC VR-571B / DSM 19440 / HAR-13)</name>
    <dbReference type="NCBI Taxonomy" id="315277"/>
    <lineage>
        <taxon>Bacteria</taxon>
        <taxon>Pseudomonadati</taxon>
        <taxon>Chlamydiota</taxon>
        <taxon>Chlamydiia</taxon>
        <taxon>Chlamydiales</taxon>
        <taxon>Chlamydiaceae</taxon>
        <taxon>Chlamydia/Chlamydophila group</taxon>
        <taxon>Chlamydia</taxon>
    </lineage>
</organism>
<accession>Q3KLB1</accession>
<comment type="function">
    <text evidence="1">The UvrABC repair system catalyzes the recognition and processing of DNA lesions. A damage recognition complex composed of 2 UvrA and 2 UvrB subunits scans DNA for abnormalities. Upon binding of the UvrA(2)B(2) complex to a putative damaged site, the DNA wraps around one UvrB monomer. DNA wrap is dependent on ATP binding by UvrB and probably causes local melting of the DNA helix, facilitating insertion of UvrB beta-hairpin between the DNA strands. Then UvrB probes one DNA strand for the presence of a lesion. If a lesion is found the UvrA subunits dissociate and the UvrB-DNA preincision complex is formed. This complex is subsequently bound by UvrC and the second UvrB is released. If no lesion is found, the DNA wraps around the other UvrB subunit that will check the other stand for damage.</text>
</comment>
<comment type="subunit">
    <text evidence="1">Forms a heterotetramer with UvrA during the search for lesions. Interacts with UvrC in an incision complex.</text>
</comment>
<comment type="subcellular location">
    <subcellularLocation>
        <location evidence="1">Cytoplasm</location>
    </subcellularLocation>
</comment>
<comment type="domain">
    <text evidence="1">The beta-hairpin motif is involved in DNA binding.</text>
</comment>
<comment type="similarity">
    <text evidence="1">Belongs to the UvrB family.</text>
</comment>
<sequence length="668" mass="75896">MGGGVLKQQFVLHAPFLPCGDQPEAIRRLSQGITDGVPAQVLLGTTGSGKTFTMANVIANVNVPTLVLAHNKTLAAQLYQEFKAFFPENAVEYFISYYDYYQPEAYIARSDTYIEKSLLINDEIDKLRLSATRSILERRDTLIVSSISCIYGIGSPDNYSSMALTLEVGKEYPRSQLSSQLVRMHYQASSTPQRSAFRERGSVIDIFLAYESDLAVRLEFMNDTLISIEYVDPLTMIPSHTTSSITLYPGSHYVTPEAVREQAIRTIREELEQRMLFFEGRPVEQERLFQRTTHDIEMIKEIGFCKGIENYSRHFTGAAPGEPPTCLLDYFPDDFLLIIDESHQTLPQLRAMYRGDQSRKQSLVEYGFRLPSAFDNRPLTYEEARRYFHRVIYVSATPGDLEIQESRGHIIEQIIRPTGIPDPLPEIRPAKGQIDDLLEEIRQRLRKDQEKILVISVTKKLAEDIAAFLAELGIAATYLHSGIETAERTQILTDLRLGNIDVLIGVNLLREGIDLPEVSLVAILDADKEGFLRSSASLIQFCGRAARNIHGKVICYADRITPSMDHMLKETERRRKIQLDYNQQHKITPQPIIKPILANPITKEAGQEETRLKMQSSKELEASIKTYEEAMYQAAQEFQFDEAVKYRDLMNAAKKQLLFQKGEEENGD</sequence>
<keyword id="KW-0067">ATP-binding</keyword>
<keyword id="KW-0963">Cytoplasm</keyword>
<keyword id="KW-0227">DNA damage</keyword>
<keyword id="KW-0228">DNA excision</keyword>
<keyword id="KW-0234">DNA repair</keyword>
<keyword id="KW-0267">Excision nuclease</keyword>
<keyword id="KW-0547">Nucleotide-binding</keyword>
<keyword id="KW-0742">SOS response</keyword>
<dbReference type="EMBL" id="CP000051">
    <property type="protein sequence ID" value="AAX50861.1"/>
    <property type="molecule type" value="Genomic_DNA"/>
</dbReference>
<dbReference type="RefSeq" id="WP_011324782.1">
    <property type="nucleotide sequence ID" value="NC_007429.1"/>
</dbReference>
<dbReference type="SMR" id="Q3KLB1"/>
<dbReference type="KEGG" id="cta:CTA_0636"/>
<dbReference type="HOGENOM" id="CLU_009621_2_1_0"/>
<dbReference type="Proteomes" id="UP000002532">
    <property type="component" value="Chromosome"/>
</dbReference>
<dbReference type="GO" id="GO:0005737">
    <property type="term" value="C:cytoplasm"/>
    <property type="evidence" value="ECO:0007669"/>
    <property type="project" value="UniProtKB-SubCell"/>
</dbReference>
<dbReference type="GO" id="GO:0009380">
    <property type="term" value="C:excinuclease repair complex"/>
    <property type="evidence" value="ECO:0007669"/>
    <property type="project" value="InterPro"/>
</dbReference>
<dbReference type="GO" id="GO:0005524">
    <property type="term" value="F:ATP binding"/>
    <property type="evidence" value="ECO:0007669"/>
    <property type="project" value="UniProtKB-UniRule"/>
</dbReference>
<dbReference type="GO" id="GO:0016887">
    <property type="term" value="F:ATP hydrolysis activity"/>
    <property type="evidence" value="ECO:0007669"/>
    <property type="project" value="InterPro"/>
</dbReference>
<dbReference type="GO" id="GO:0003677">
    <property type="term" value="F:DNA binding"/>
    <property type="evidence" value="ECO:0007669"/>
    <property type="project" value="UniProtKB-UniRule"/>
</dbReference>
<dbReference type="GO" id="GO:0009381">
    <property type="term" value="F:excinuclease ABC activity"/>
    <property type="evidence" value="ECO:0007669"/>
    <property type="project" value="UniProtKB-UniRule"/>
</dbReference>
<dbReference type="GO" id="GO:0006289">
    <property type="term" value="P:nucleotide-excision repair"/>
    <property type="evidence" value="ECO:0007669"/>
    <property type="project" value="UniProtKB-UniRule"/>
</dbReference>
<dbReference type="GO" id="GO:0009432">
    <property type="term" value="P:SOS response"/>
    <property type="evidence" value="ECO:0007669"/>
    <property type="project" value="UniProtKB-UniRule"/>
</dbReference>
<dbReference type="CDD" id="cd17916">
    <property type="entry name" value="DEXHc_UvrB"/>
    <property type="match status" value="1"/>
</dbReference>
<dbReference type="CDD" id="cd18790">
    <property type="entry name" value="SF2_C_UvrB"/>
    <property type="match status" value="1"/>
</dbReference>
<dbReference type="Gene3D" id="3.40.50.300">
    <property type="entry name" value="P-loop containing nucleotide triphosphate hydrolases"/>
    <property type="match status" value="3"/>
</dbReference>
<dbReference type="Gene3D" id="4.10.860.10">
    <property type="entry name" value="UVR domain"/>
    <property type="match status" value="1"/>
</dbReference>
<dbReference type="HAMAP" id="MF_00204">
    <property type="entry name" value="UvrB"/>
    <property type="match status" value="1"/>
</dbReference>
<dbReference type="InterPro" id="IPR006935">
    <property type="entry name" value="Helicase/UvrB_N"/>
</dbReference>
<dbReference type="InterPro" id="IPR014001">
    <property type="entry name" value="Helicase_ATP-bd"/>
</dbReference>
<dbReference type="InterPro" id="IPR001650">
    <property type="entry name" value="Helicase_C-like"/>
</dbReference>
<dbReference type="InterPro" id="IPR027417">
    <property type="entry name" value="P-loop_NTPase"/>
</dbReference>
<dbReference type="InterPro" id="IPR001943">
    <property type="entry name" value="UVR_dom"/>
</dbReference>
<dbReference type="InterPro" id="IPR036876">
    <property type="entry name" value="UVR_dom_sf"/>
</dbReference>
<dbReference type="InterPro" id="IPR004807">
    <property type="entry name" value="UvrB"/>
</dbReference>
<dbReference type="InterPro" id="IPR041471">
    <property type="entry name" value="UvrB_inter"/>
</dbReference>
<dbReference type="InterPro" id="IPR024759">
    <property type="entry name" value="UvrB_YAD/RRR_dom"/>
</dbReference>
<dbReference type="NCBIfam" id="NF003673">
    <property type="entry name" value="PRK05298.1"/>
    <property type="match status" value="1"/>
</dbReference>
<dbReference type="NCBIfam" id="TIGR00631">
    <property type="entry name" value="uvrb"/>
    <property type="match status" value="1"/>
</dbReference>
<dbReference type="PANTHER" id="PTHR24029">
    <property type="entry name" value="UVRABC SYSTEM PROTEIN B"/>
    <property type="match status" value="1"/>
</dbReference>
<dbReference type="PANTHER" id="PTHR24029:SF0">
    <property type="entry name" value="UVRABC SYSTEM PROTEIN B"/>
    <property type="match status" value="1"/>
</dbReference>
<dbReference type="Pfam" id="PF00271">
    <property type="entry name" value="Helicase_C"/>
    <property type="match status" value="1"/>
</dbReference>
<dbReference type="Pfam" id="PF04851">
    <property type="entry name" value="ResIII"/>
    <property type="match status" value="1"/>
</dbReference>
<dbReference type="Pfam" id="PF02151">
    <property type="entry name" value="UVR"/>
    <property type="match status" value="1"/>
</dbReference>
<dbReference type="Pfam" id="PF12344">
    <property type="entry name" value="UvrB"/>
    <property type="match status" value="1"/>
</dbReference>
<dbReference type="Pfam" id="PF17757">
    <property type="entry name" value="UvrB_inter"/>
    <property type="match status" value="1"/>
</dbReference>
<dbReference type="SMART" id="SM00487">
    <property type="entry name" value="DEXDc"/>
    <property type="match status" value="1"/>
</dbReference>
<dbReference type="SMART" id="SM00490">
    <property type="entry name" value="HELICc"/>
    <property type="match status" value="1"/>
</dbReference>
<dbReference type="SUPFAM" id="SSF46600">
    <property type="entry name" value="C-terminal UvrC-binding domain of UvrB"/>
    <property type="match status" value="1"/>
</dbReference>
<dbReference type="SUPFAM" id="SSF52540">
    <property type="entry name" value="P-loop containing nucleoside triphosphate hydrolases"/>
    <property type="match status" value="2"/>
</dbReference>
<dbReference type="PROSITE" id="PS51192">
    <property type="entry name" value="HELICASE_ATP_BIND_1"/>
    <property type="match status" value="1"/>
</dbReference>
<dbReference type="PROSITE" id="PS51194">
    <property type="entry name" value="HELICASE_CTER"/>
    <property type="match status" value="1"/>
</dbReference>
<dbReference type="PROSITE" id="PS50151">
    <property type="entry name" value="UVR"/>
    <property type="match status" value="1"/>
</dbReference>
<protein>
    <recommendedName>
        <fullName evidence="1">UvrABC system protein B</fullName>
        <shortName evidence="1">Protein UvrB</shortName>
    </recommendedName>
    <alternativeName>
        <fullName evidence="1">Excinuclease ABC subunit B</fullName>
    </alternativeName>
</protein>
<reference key="1">
    <citation type="journal article" date="2005" name="Infect. Immun.">
        <title>Comparative genomic analysis of Chlamydia trachomatis oculotropic and genitotropic strains.</title>
        <authorList>
            <person name="Carlson J.H."/>
            <person name="Porcella S.F."/>
            <person name="McClarty G."/>
            <person name="Caldwell H.D."/>
        </authorList>
    </citation>
    <scope>NUCLEOTIDE SEQUENCE [LARGE SCALE GENOMIC DNA]</scope>
    <source>
        <strain>ATCC VR-571B / DSM 19440 / HAR-13</strain>
    </source>
</reference>
<name>UVRB_CHLTA</name>
<proteinExistence type="inferred from homology"/>